<name>RL35_MYCMS</name>
<proteinExistence type="inferred from homology"/>
<dbReference type="EMBL" id="BX293980">
    <property type="protein sequence ID" value="CAE76865.1"/>
    <property type="molecule type" value="Genomic_DNA"/>
</dbReference>
<dbReference type="RefSeq" id="NP_975223.1">
    <property type="nucleotide sequence ID" value="NC_005364.2"/>
</dbReference>
<dbReference type="RefSeq" id="WP_011166422.1">
    <property type="nucleotide sequence ID" value="NC_005364.2"/>
</dbReference>
<dbReference type="SMR" id="Q6MU21"/>
<dbReference type="STRING" id="272632.MSC_0222"/>
<dbReference type="GeneID" id="93426591"/>
<dbReference type="KEGG" id="mmy:MSC_0222"/>
<dbReference type="PATRIC" id="fig|272632.4.peg.236"/>
<dbReference type="eggNOG" id="COG0291">
    <property type="taxonomic scope" value="Bacteria"/>
</dbReference>
<dbReference type="HOGENOM" id="CLU_169643_3_1_14"/>
<dbReference type="PRO" id="PR:Q6MU21"/>
<dbReference type="Proteomes" id="UP000001016">
    <property type="component" value="Chromosome"/>
</dbReference>
<dbReference type="GO" id="GO:0022625">
    <property type="term" value="C:cytosolic large ribosomal subunit"/>
    <property type="evidence" value="ECO:0007669"/>
    <property type="project" value="TreeGrafter"/>
</dbReference>
<dbReference type="GO" id="GO:0003735">
    <property type="term" value="F:structural constituent of ribosome"/>
    <property type="evidence" value="ECO:0007669"/>
    <property type="project" value="InterPro"/>
</dbReference>
<dbReference type="GO" id="GO:0006412">
    <property type="term" value="P:translation"/>
    <property type="evidence" value="ECO:0007669"/>
    <property type="project" value="UniProtKB-UniRule"/>
</dbReference>
<dbReference type="FunFam" id="4.10.410.60:FF:000001">
    <property type="entry name" value="50S ribosomal protein L35"/>
    <property type="match status" value="1"/>
</dbReference>
<dbReference type="Gene3D" id="4.10.410.60">
    <property type="match status" value="1"/>
</dbReference>
<dbReference type="HAMAP" id="MF_00514">
    <property type="entry name" value="Ribosomal_bL35"/>
    <property type="match status" value="1"/>
</dbReference>
<dbReference type="InterPro" id="IPR001706">
    <property type="entry name" value="Ribosomal_bL35"/>
</dbReference>
<dbReference type="InterPro" id="IPR021137">
    <property type="entry name" value="Ribosomal_bL35-like"/>
</dbReference>
<dbReference type="InterPro" id="IPR018265">
    <property type="entry name" value="Ribosomal_bL35_CS"/>
</dbReference>
<dbReference type="InterPro" id="IPR037229">
    <property type="entry name" value="Ribosomal_bL35_sf"/>
</dbReference>
<dbReference type="NCBIfam" id="TIGR00001">
    <property type="entry name" value="rpmI_bact"/>
    <property type="match status" value="1"/>
</dbReference>
<dbReference type="PANTHER" id="PTHR33343">
    <property type="entry name" value="54S RIBOSOMAL PROTEIN BL35M"/>
    <property type="match status" value="1"/>
</dbReference>
<dbReference type="PANTHER" id="PTHR33343:SF1">
    <property type="entry name" value="LARGE RIBOSOMAL SUBUNIT PROTEIN BL35M"/>
    <property type="match status" value="1"/>
</dbReference>
<dbReference type="Pfam" id="PF01632">
    <property type="entry name" value="Ribosomal_L35p"/>
    <property type="match status" value="1"/>
</dbReference>
<dbReference type="PRINTS" id="PR00064">
    <property type="entry name" value="RIBOSOMALL35"/>
</dbReference>
<dbReference type="SUPFAM" id="SSF143034">
    <property type="entry name" value="L35p-like"/>
    <property type="match status" value="1"/>
</dbReference>
<dbReference type="PROSITE" id="PS00936">
    <property type="entry name" value="RIBOSOMAL_L35"/>
    <property type="match status" value="1"/>
</dbReference>
<gene>
    <name evidence="1" type="primary">rpmI</name>
    <name type="ordered locus">MSC_0222</name>
</gene>
<sequence length="63" mass="7113">MPKMKTKKSLAKRVTVKSNGTLKRAKAYRSHRATGKTTKQKRQLSKATIISKVDMKNLKGLLQ</sequence>
<reference key="1">
    <citation type="journal article" date="2004" name="Genome Res.">
        <title>The genome sequence of Mycoplasma mycoides subsp. mycoides SC type strain PG1T, the causative agent of contagious bovine pleuropneumonia (CBPP).</title>
        <authorList>
            <person name="Westberg J."/>
            <person name="Persson A."/>
            <person name="Holmberg A."/>
            <person name="Goesmann A."/>
            <person name="Lundeberg J."/>
            <person name="Johansson K.-E."/>
            <person name="Pettersson B."/>
            <person name="Uhlen M."/>
        </authorList>
    </citation>
    <scope>NUCLEOTIDE SEQUENCE [LARGE SCALE GENOMIC DNA]</scope>
    <source>
        <strain>CCUG 32753 / NCTC 10114 / PG1</strain>
    </source>
</reference>
<evidence type="ECO:0000255" key="1">
    <source>
        <dbReference type="HAMAP-Rule" id="MF_00514"/>
    </source>
</evidence>
<evidence type="ECO:0000256" key="2">
    <source>
        <dbReference type="SAM" id="MobiDB-lite"/>
    </source>
</evidence>
<evidence type="ECO:0000305" key="3"/>
<keyword id="KW-1185">Reference proteome</keyword>
<keyword id="KW-0687">Ribonucleoprotein</keyword>
<keyword id="KW-0689">Ribosomal protein</keyword>
<comment type="similarity">
    <text evidence="1">Belongs to the bacterial ribosomal protein bL35 family.</text>
</comment>
<protein>
    <recommendedName>
        <fullName evidence="1">Large ribosomal subunit protein bL35</fullName>
    </recommendedName>
    <alternativeName>
        <fullName evidence="3">50S ribosomal protein L35</fullName>
    </alternativeName>
</protein>
<feature type="chain" id="PRO_0000177382" description="Large ribosomal subunit protein bL35">
    <location>
        <begin position="1"/>
        <end position="63"/>
    </location>
</feature>
<feature type="region of interest" description="Disordered" evidence="2">
    <location>
        <begin position="24"/>
        <end position="44"/>
    </location>
</feature>
<accession>Q6MU21</accession>
<organism>
    <name type="scientific">Mycoplasma mycoides subsp. mycoides SC (strain CCUG 32753 / NCTC 10114 / PG1)</name>
    <dbReference type="NCBI Taxonomy" id="272632"/>
    <lineage>
        <taxon>Bacteria</taxon>
        <taxon>Bacillati</taxon>
        <taxon>Mycoplasmatota</taxon>
        <taxon>Mollicutes</taxon>
        <taxon>Mycoplasmataceae</taxon>
        <taxon>Mycoplasma</taxon>
    </lineage>
</organism>